<reference key="1">
    <citation type="submission" date="2004-07" db="EMBL/GenBank/DDBJ databases">
        <authorList>
            <consortium name="NIH - Xenopus Gene Collection (XGC) project"/>
        </authorList>
    </citation>
    <scope>NUCLEOTIDE SEQUENCE [LARGE SCALE MRNA]</scope>
    <source>
        <tissue>Embryo</tissue>
    </source>
</reference>
<protein>
    <recommendedName>
        <fullName>Phosphoribosyltransferase domain-containing protein 1</fullName>
    </recommendedName>
</protein>
<evidence type="ECO:0000250" key="1"/>
<evidence type="ECO:0000305" key="2"/>
<organism>
    <name type="scientific">Xenopus laevis</name>
    <name type="common">African clawed frog</name>
    <dbReference type="NCBI Taxonomy" id="8355"/>
    <lineage>
        <taxon>Eukaryota</taxon>
        <taxon>Metazoa</taxon>
        <taxon>Chordata</taxon>
        <taxon>Craniata</taxon>
        <taxon>Vertebrata</taxon>
        <taxon>Euteleostomi</taxon>
        <taxon>Amphibia</taxon>
        <taxon>Batrachia</taxon>
        <taxon>Anura</taxon>
        <taxon>Pipoidea</taxon>
        <taxon>Pipidae</taxon>
        <taxon>Xenopodinae</taxon>
        <taxon>Xenopus</taxon>
        <taxon>Xenopus</taxon>
    </lineage>
</organism>
<sequence>MTEKSISPSRDIGVVVPDNWTGYELDVFSLPNHYCEDLECVFIPHGVIVDRTERIAHDIMRDIGDNHITVLCVLKGGYRFCTDLVEHIKNLSRNSERFISMRVDFIRLKCYRNDQCMDEMQIIGGEDLAKLSGKNVLIVEDIINTGRTMTALLNQLEKYKPKMVKVASLLVKRSASSNQYRPDYTGFEIPNKFVVGYALDYNEYFRDLHHICIINEKGKNKYKV</sequence>
<comment type="similarity">
    <text evidence="2">Belongs to the purine/pyrimidine phosphoribosyltransferase family.</text>
</comment>
<comment type="caution">
    <text evidence="2">Lacks the conserved active site Asp and is not expected to have phosphoribosyltransferase activity.</text>
</comment>
<name>PRDC1_XENLA</name>
<feature type="chain" id="PRO_0000318177" description="Phosphoribosyltransferase domain-containing protein 1">
    <location>
        <begin position="1"/>
        <end position="224"/>
    </location>
</feature>
<feature type="binding site" evidence="1">
    <location>
        <begin position="140"/>
        <end position="148"/>
    </location>
    <ligand>
        <name>GMP</name>
        <dbReference type="ChEBI" id="CHEBI:58115"/>
    </ligand>
</feature>
<feature type="binding site" evidence="1">
    <location>
        <position position="140"/>
    </location>
    <ligand>
        <name>Mg(2+)</name>
        <dbReference type="ChEBI" id="CHEBI:18420"/>
    </ligand>
</feature>
<feature type="binding site" evidence="1">
    <location>
        <position position="141"/>
    </location>
    <ligand>
        <name>Mg(2+)</name>
        <dbReference type="ChEBI" id="CHEBI:18420"/>
    </ligand>
</feature>
<feature type="binding site" evidence="1">
    <location>
        <position position="172"/>
    </location>
    <ligand>
        <name>GMP</name>
        <dbReference type="ChEBI" id="CHEBI:58115"/>
    </ligand>
</feature>
<feature type="binding site" evidence="1">
    <location>
        <begin position="193"/>
        <end position="194"/>
    </location>
    <ligand>
        <name>GMP</name>
        <dbReference type="ChEBI" id="CHEBI:58115"/>
    </ligand>
</feature>
<feature type="binding site" evidence="1">
    <location>
        <position position="200"/>
    </location>
    <ligand>
        <name>GMP</name>
        <dbReference type="ChEBI" id="CHEBI:58115"/>
    </ligand>
</feature>
<feature type="binding site" evidence="1">
    <location>
        <position position="200"/>
    </location>
    <ligand>
        <name>Mg(2+)</name>
        <dbReference type="ChEBI" id="CHEBI:18420"/>
    </ligand>
</feature>
<gene>
    <name type="primary">prtfdc1</name>
</gene>
<accession>Q6DCP3</accession>
<proteinExistence type="evidence at transcript level"/>
<keyword id="KW-0460">Magnesium</keyword>
<keyword id="KW-0479">Metal-binding</keyword>
<keyword id="KW-0547">Nucleotide-binding</keyword>
<keyword id="KW-1185">Reference proteome</keyword>
<dbReference type="EMBL" id="BC077960">
    <property type="protein sequence ID" value="AAH77960.1"/>
    <property type="molecule type" value="mRNA"/>
</dbReference>
<dbReference type="RefSeq" id="NP_001087060.1">
    <property type="nucleotide sequence ID" value="NM_001093591.1"/>
</dbReference>
<dbReference type="SMR" id="Q6DCP3"/>
<dbReference type="DNASU" id="446895"/>
<dbReference type="GeneID" id="446895"/>
<dbReference type="KEGG" id="xla:446895"/>
<dbReference type="AGR" id="Xenbase:XB-GENE-942169"/>
<dbReference type="CTD" id="446895"/>
<dbReference type="Xenbase" id="XB-GENE-942169">
    <property type="gene designation" value="prtfdc1.L"/>
</dbReference>
<dbReference type="OMA" id="VIFMEDI"/>
<dbReference type="OrthoDB" id="9449045at2759"/>
<dbReference type="Proteomes" id="UP000186698">
    <property type="component" value="Chromosome 6L"/>
</dbReference>
<dbReference type="Bgee" id="446895">
    <property type="expression patterns" value="Expressed in pancreas and 20 other cell types or tissues"/>
</dbReference>
<dbReference type="GO" id="GO:0005829">
    <property type="term" value="C:cytosol"/>
    <property type="evidence" value="ECO:0000318"/>
    <property type="project" value="GO_Central"/>
</dbReference>
<dbReference type="GO" id="GO:0004422">
    <property type="term" value="F:hypoxanthine phosphoribosyltransferase activity"/>
    <property type="evidence" value="ECO:0007669"/>
    <property type="project" value="InterPro"/>
</dbReference>
<dbReference type="GO" id="GO:0046872">
    <property type="term" value="F:metal ion binding"/>
    <property type="evidence" value="ECO:0007669"/>
    <property type="project" value="UniProtKB-KW"/>
</dbReference>
<dbReference type="GO" id="GO:0000166">
    <property type="term" value="F:nucleotide binding"/>
    <property type="evidence" value="ECO:0007669"/>
    <property type="project" value="UniProtKB-KW"/>
</dbReference>
<dbReference type="GO" id="GO:0006166">
    <property type="term" value="P:purine ribonucleoside salvage"/>
    <property type="evidence" value="ECO:0007669"/>
    <property type="project" value="InterPro"/>
</dbReference>
<dbReference type="CDD" id="cd06223">
    <property type="entry name" value="PRTases_typeI"/>
    <property type="match status" value="1"/>
</dbReference>
<dbReference type="FunFam" id="3.40.50.2020:FF:000038">
    <property type="entry name" value="Hypoxanthine phosphoribosyltransferase"/>
    <property type="match status" value="1"/>
</dbReference>
<dbReference type="Gene3D" id="3.40.50.2020">
    <property type="match status" value="1"/>
</dbReference>
<dbReference type="InterPro" id="IPR050408">
    <property type="entry name" value="HGPRT"/>
</dbReference>
<dbReference type="InterPro" id="IPR005904">
    <property type="entry name" value="Hxn_phspho_trans"/>
</dbReference>
<dbReference type="InterPro" id="IPR000836">
    <property type="entry name" value="PRibTrfase_dom"/>
</dbReference>
<dbReference type="InterPro" id="IPR029057">
    <property type="entry name" value="PRTase-like"/>
</dbReference>
<dbReference type="NCBIfam" id="TIGR01203">
    <property type="entry name" value="HGPRTase"/>
    <property type="match status" value="1"/>
</dbReference>
<dbReference type="PANTHER" id="PTHR43340">
    <property type="entry name" value="HYPOXANTHINE-GUANINE PHOSPHORIBOSYLTRANSFERASE"/>
    <property type="match status" value="1"/>
</dbReference>
<dbReference type="PANTHER" id="PTHR43340:SF5">
    <property type="entry name" value="PHOSPHORIBOSYLTRANSFERASE DOMAIN-CONTAINING PROTEIN 1"/>
    <property type="match status" value="1"/>
</dbReference>
<dbReference type="Pfam" id="PF00156">
    <property type="entry name" value="Pribosyltran"/>
    <property type="match status" value="1"/>
</dbReference>
<dbReference type="SUPFAM" id="SSF53271">
    <property type="entry name" value="PRTase-like"/>
    <property type="match status" value="1"/>
</dbReference>